<keyword id="KW-0963">Cytoplasm</keyword>
<keyword id="KW-0489">Methyltransferase</keyword>
<keyword id="KW-0698">rRNA processing</keyword>
<keyword id="KW-0949">S-adenosyl-L-methionine</keyword>
<keyword id="KW-0808">Transferase</keyword>
<gene>
    <name evidence="1" type="primary">rlmH</name>
    <name type="ordered locus">SeSA_A0801</name>
</gene>
<accession>B4TPW8</accession>
<sequence>MKLQLVAVGTKMPDWVQTGFTEYLRRFPKDMPFELIEIPAGKRGKNADIKRILDKEGEQMLAAAGKNRIVTLDIPGKPWDTPQLANELERWKQDGRDVSLLIGGPEGLSPACKAAAEQSWSLSALTLPHPLVRVLVAESLYRAWSITTNHPYHRE</sequence>
<feature type="chain" id="PRO_0000366655" description="Ribosomal RNA large subunit methyltransferase H">
    <location>
        <begin position="1"/>
        <end position="155"/>
    </location>
</feature>
<feature type="binding site" evidence="1">
    <location>
        <position position="72"/>
    </location>
    <ligand>
        <name>S-adenosyl-L-methionine</name>
        <dbReference type="ChEBI" id="CHEBI:59789"/>
    </ligand>
</feature>
<feature type="binding site" evidence="1">
    <location>
        <position position="103"/>
    </location>
    <ligand>
        <name>S-adenosyl-L-methionine</name>
        <dbReference type="ChEBI" id="CHEBI:59789"/>
    </ligand>
</feature>
<feature type="binding site" evidence="1">
    <location>
        <begin position="122"/>
        <end position="127"/>
    </location>
    <ligand>
        <name>S-adenosyl-L-methionine</name>
        <dbReference type="ChEBI" id="CHEBI:59789"/>
    </ligand>
</feature>
<name>RLMH_SALSV</name>
<comment type="function">
    <text evidence="1">Specifically methylates the pseudouridine at position 1915 (m3Psi1915) in 23S rRNA.</text>
</comment>
<comment type="catalytic activity">
    <reaction evidence="1">
        <text>pseudouridine(1915) in 23S rRNA + S-adenosyl-L-methionine = N(3)-methylpseudouridine(1915) in 23S rRNA + S-adenosyl-L-homocysteine + H(+)</text>
        <dbReference type="Rhea" id="RHEA:42752"/>
        <dbReference type="Rhea" id="RHEA-COMP:10221"/>
        <dbReference type="Rhea" id="RHEA-COMP:10222"/>
        <dbReference type="ChEBI" id="CHEBI:15378"/>
        <dbReference type="ChEBI" id="CHEBI:57856"/>
        <dbReference type="ChEBI" id="CHEBI:59789"/>
        <dbReference type="ChEBI" id="CHEBI:65314"/>
        <dbReference type="ChEBI" id="CHEBI:74486"/>
        <dbReference type="EC" id="2.1.1.177"/>
    </reaction>
</comment>
<comment type="subunit">
    <text evidence="1">Homodimer.</text>
</comment>
<comment type="subcellular location">
    <subcellularLocation>
        <location evidence="1">Cytoplasm</location>
    </subcellularLocation>
</comment>
<comment type="similarity">
    <text evidence="1">Belongs to the RNA methyltransferase RlmH family.</text>
</comment>
<proteinExistence type="inferred from homology"/>
<dbReference type="EC" id="2.1.1.177" evidence="1"/>
<dbReference type="EMBL" id="CP001127">
    <property type="protein sequence ID" value="ACF89988.1"/>
    <property type="molecule type" value="Genomic_DNA"/>
</dbReference>
<dbReference type="RefSeq" id="WP_000776107.1">
    <property type="nucleotide sequence ID" value="NC_011094.1"/>
</dbReference>
<dbReference type="SMR" id="B4TPW8"/>
<dbReference type="GeneID" id="66755108"/>
<dbReference type="KEGG" id="sew:SeSA_A0801"/>
<dbReference type="HOGENOM" id="CLU_100552_1_0_6"/>
<dbReference type="Proteomes" id="UP000001865">
    <property type="component" value="Chromosome"/>
</dbReference>
<dbReference type="GO" id="GO:0005737">
    <property type="term" value="C:cytoplasm"/>
    <property type="evidence" value="ECO:0007669"/>
    <property type="project" value="UniProtKB-SubCell"/>
</dbReference>
<dbReference type="GO" id="GO:0070038">
    <property type="term" value="F:rRNA (pseudouridine-N3-)-methyltransferase activity"/>
    <property type="evidence" value="ECO:0007669"/>
    <property type="project" value="UniProtKB-UniRule"/>
</dbReference>
<dbReference type="CDD" id="cd18081">
    <property type="entry name" value="RlmH-like"/>
    <property type="match status" value="1"/>
</dbReference>
<dbReference type="FunFam" id="3.40.1280.10:FF:000004">
    <property type="entry name" value="Ribosomal RNA large subunit methyltransferase H"/>
    <property type="match status" value="1"/>
</dbReference>
<dbReference type="Gene3D" id="3.40.1280.10">
    <property type="match status" value="1"/>
</dbReference>
<dbReference type="HAMAP" id="MF_00658">
    <property type="entry name" value="23SrRNA_methyltr_H"/>
    <property type="match status" value="1"/>
</dbReference>
<dbReference type="InterPro" id="IPR029028">
    <property type="entry name" value="Alpha/beta_knot_MTases"/>
</dbReference>
<dbReference type="InterPro" id="IPR003742">
    <property type="entry name" value="RlmH-like"/>
</dbReference>
<dbReference type="InterPro" id="IPR029026">
    <property type="entry name" value="tRNA_m1G_MTases_N"/>
</dbReference>
<dbReference type="NCBIfam" id="NF000984">
    <property type="entry name" value="PRK00103.1-1"/>
    <property type="match status" value="1"/>
</dbReference>
<dbReference type="NCBIfam" id="NF000986">
    <property type="entry name" value="PRK00103.1-4"/>
    <property type="match status" value="1"/>
</dbReference>
<dbReference type="NCBIfam" id="TIGR00246">
    <property type="entry name" value="tRNA_RlmH_YbeA"/>
    <property type="match status" value="1"/>
</dbReference>
<dbReference type="PANTHER" id="PTHR33603">
    <property type="entry name" value="METHYLTRANSFERASE"/>
    <property type="match status" value="1"/>
</dbReference>
<dbReference type="PANTHER" id="PTHR33603:SF1">
    <property type="entry name" value="RIBOSOMAL RNA LARGE SUBUNIT METHYLTRANSFERASE H"/>
    <property type="match status" value="1"/>
</dbReference>
<dbReference type="Pfam" id="PF02590">
    <property type="entry name" value="SPOUT_MTase"/>
    <property type="match status" value="1"/>
</dbReference>
<dbReference type="PIRSF" id="PIRSF004505">
    <property type="entry name" value="MT_bac"/>
    <property type="match status" value="1"/>
</dbReference>
<dbReference type="SUPFAM" id="SSF75217">
    <property type="entry name" value="alpha/beta knot"/>
    <property type="match status" value="1"/>
</dbReference>
<reference key="1">
    <citation type="journal article" date="2011" name="J. Bacteriol.">
        <title>Comparative genomics of 28 Salmonella enterica isolates: evidence for CRISPR-mediated adaptive sublineage evolution.</title>
        <authorList>
            <person name="Fricke W.F."/>
            <person name="Mammel M.K."/>
            <person name="McDermott P.F."/>
            <person name="Tartera C."/>
            <person name="White D.G."/>
            <person name="Leclerc J.E."/>
            <person name="Ravel J."/>
            <person name="Cebula T.A."/>
        </authorList>
    </citation>
    <scope>NUCLEOTIDE SEQUENCE [LARGE SCALE GENOMIC DNA]</scope>
    <source>
        <strain>CVM19633</strain>
    </source>
</reference>
<protein>
    <recommendedName>
        <fullName evidence="1">Ribosomal RNA large subunit methyltransferase H</fullName>
        <ecNumber evidence="1">2.1.1.177</ecNumber>
    </recommendedName>
    <alternativeName>
        <fullName evidence="1">23S rRNA (pseudouridine1915-N3)-methyltransferase</fullName>
    </alternativeName>
    <alternativeName>
        <fullName evidence="1">23S rRNA m3Psi1915 methyltransferase</fullName>
    </alternativeName>
    <alternativeName>
        <fullName evidence="1">rRNA (pseudouridine-N3-)-methyltransferase RlmH</fullName>
    </alternativeName>
</protein>
<evidence type="ECO:0000255" key="1">
    <source>
        <dbReference type="HAMAP-Rule" id="MF_00658"/>
    </source>
</evidence>
<organism>
    <name type="scientific">Salmonella schwarzengrund (strain CVM19633)</name>
    <dbReference type="NCBI Taxonomy" id="439843"/>
    <lineage>
        <taxon>Bacteria</taxon>
        <taxon>Pseudomonadati</taxon>
        <taxon>Pseudomonadota</taxon>
        <taxon>Gammaproteobacteria</taxon>
        <taxon>Enterobacterales</taxon>
        <taxon>Enterobacteriaceae</taxon>
        <taxon>Salmonella</taxon>
    </lineage>
</organism>